<gene>
    <name evidence="1" type="primary">rnp3</name>
    <name type="ordered locus">MA_1782</name>
</gene>
<name>RNP3_METAC</name>
<proteinExistence type="inferred from homology"/>
<reference key="1">
    <citation type="journal article" date="2002" name="Genome Res.">
        <title>The genome of Methanosarcina acetivorans reveals extensive metabolic and physiological diversity.</title>
        <authorList>
            <person name="Galagan J.E."/>
            <person name="Nusbaum C."/>
            <person name="Roy A."/>
            <person name="Endrizzi M.G."/>
            <person name="Macdonald P."/>
            <person name="FitzHugh W."/>
            <person name="Calvo S."/>
            <person name="Engels R."/>
            <person name="Smirnov S."/>
            <person name="Atnoor D."/>
            <person name="Brown A."/>
            <person name="Allen N."/>
            <person name="Naylor J."/>
            <person name="Stange-Thomann N."/>
            <person name="DeArellano K."/>
            <person name="Johnson R."/>
            <person name="Linton L."/>
            <person name="McEwan P."/>
            <person name="McKernan K."/>
            <person name="Talamas J."/>
            <person name="Tirrell A."/>
            <person name="Ye W."/>
            <person name="Zimmer A."/>
            <person name="Barber R.D."/>
            <person name="Cann I."/>
            <person name="Graham D.E."/>
            <person name="Grahame D.A."/>
            <person name="Guss A.M."/>
            <person name="Hedderich R."/>
            <person name="Ingram-Smith C."/>
            <person name="Kuettner H.C."/>
            <person name="Krzycki J.A."/>
            <person name="Leigh J.A."/>
            <person name="Li W."/>
            <person name="Liu J."/>
            <person name="Mukhopadhyay B."/>
            <person name="Reeve J.N."/>
            <person name="Smith K."/>
            <person name="Springer T.A."/>
            <person name="Umayam L.A."/>
            <person name="White O."/>
            <person name="White R.H."/>
            <person name="de Macario E.C."/>
            <person name="Ferry J.G."/>
            <person name="Jarrell K.F."/>
            <person name="Jing H."/>
            <person name="Macario A.J.L."/>
            <person name="Paulsen I.T."/>
            <person name="Pritchett M."/>
            <person name="Sowers K.R."/>
            <person name="Swanson R.V."/>
            <person name="Zinder S.H."/>
            <person name="Lander E."/>
            <person name="Metcalf W.W."/>
            <person name="Birren B."/>
        </authorList>
    </citation>
    <scope>NUCLEOTIDE SEQUENCE [LARGE SCALE GENOMIC DNA]</scope>
    <source>
        <strain>ATCC 35395 / DSM 2834 / JCM 12185 / C2A</strain>
    </source>
</reference>
<sequence length="239" mass="26214">MGKPKFYDFCVHAVPDGDSTAQEQVSLGRHFGFSGIALANHSDRLPDRKPILPFIEGFEVFRGIELVEENPSKLHSLIGKFRNSMDVLIVHGGSEAVNRAALENPRVDILNHPAFDRSSGLNQVLAKAAAENGVAIGIILRPLLHSRGSRRIRLLSDLKSNLELARKYDVSLVLCSDAMSCFDLRSPMEMLALAEVCGLEEDEALEAISTVPEKIIAKNRPGPGYIKKGIEVLEGEDLF</sequence>
<evidence type="ECO:0000255" key="1">
    <source>
        <dbReference type="HAMAP-Rule" id="MF_00756"/>
    </source>
</evidence>
<organism>
    <name type="scientific">Methanosarcina acetivorans (strain ATCC 35395 / DSM 2834 / JCM 12185 / C2A)</name>
    <dbReference type="NCBI Taxonomy" id="188937"/>
    <lineage>
        <taxon>Archaea</taxon>
        <taxon>Methanobacteriati</taxon>
        <taxon>Methanobacteriota</taxon>
        <taxon>Stenosarchaea group</taxon>
        <taxon>Methanomicrobia</taxon>
        <taxon>Methanosarcinales</taxon>
        <taxon>Methanosarcinaceae</taxon>
        <taxon>Methanosarcina</taxon>
    </lineage>
</organism>
<protein>
    <recommendedName>
        <fullName evidence="1">Ribonuclease P protein component 3</fullName>
        <shortName evidence="1">RNase P component 3</shortName>
        <ecNumber evidence="1">3.1.26.5</ecNumber>
    </recommendedName>
    <alternativeName>
        <fullName evidence="1">Rpp30</fullName>
    </alternativeName>
</protein>
<keyword id="KW-0963">Cytoplasm</keyword>
<keyword id="KW-0255">Endonuclease</keyword>
<keyword id="KW-0378">Hydrolase</keyword>
<keyword id="KW-0540">Nuclease</keyword>
<keyword id="KW-1185">Reference proteome</keyword>
<keyword id="KW-0819">tRNA processing</keyword>
<dbReference type="EC" id="3.1.26.5" evidence="1"/>
<dbReference type="EMBL" id="AE010299">
    <property type="protein sequence ID" value="AAM05188.1"/>
    <property type="molecule type" value="Genomic_DNA"/>
</dbReference>
<dbReference type="RefSeq" id="WP_011021785.1">
    <property type="nucleotide sequence ID" value="NC_003552.1"/>
</dbReference>
<dbReference type="SMR" id="Q8TPX2"/>
<dbReference type="STRING" id="188937.MA_1782"/>
<dbReference type="EnsemblBacteria" id="AAM05188">
    <property type="protein sequence ID" value="AAM05188"/>
    <property type="gene ID" value="MA_1782"/>
</dbReference>
<dbReference type="GeneID" id="1473671"/>
<dbReference type="KEGG" id="mac:MA_1782"/>
<dbReference type="HOGENOM" id="CLU_074509_1_0_2"/>
<dbReference type="InParanoid" id="Q8TPX2"/>
<dbReference type="OrthoDB" id="85765at2157"/>
<dbReference type="PhylomeDB" id="Q8TPX2"/>
<dbReference type="Proteomes" id="UP000002487">
    <property type="component" value="Chromosome"/>
</dbReference>
<dbReference type="GO" id="GO:0005737">
    <property type="term" value="C:cytoplasm"/>
    <property type="evidence" value="ECO:0007669"/>
    <property type="project" value="UniProtKB-SubCell"/>
</dbReference>
<dbReference type="GO" id="GO:0030677">
    <property type="term" value="C:ribonuclease P complex"/>
    <property type="evidence" value="ECO:0007669"/>
    <property type="project" value="UniProtKB-UniRule"/>
</dbReference>
<dbReference type="GO" id="GO:0004526">
    <property type="term" value="F:ribonuclease P activity"/>
    <property type="evidence" value="ECO:0007669"/>
    <property type="project" value="UniProtKB-UniRule"/>
</dbReference>
<dbReference type="GO" id="GO:0003723">
    <property type="term" value="F:RNA binding"/>
    <property type="evidence" value="ECO:0000318"/>
    <property type="project" value="GO_Central"/>
</dbReference>
<dbReference type="GO" id="GO:0001682">
    <property type="term" value="P:tRNA 5'-leader removal"/>
    <property type="evidence" value="ECO:0007669"/>
    <property type="project" value="UniProtKB-UniRule"/>
</dbReference>
<dbReference type="Gene3D" id="3.20.20.140">
    <property type="entry name" value="Metal-dependent hydrolases"/>
    <property type="match status" value="1"/>
</dbReference>
<dbReference type="HAMAP" id="MF_00756">
    <property type="entry name" value="RNase_P_3"/>
    <property type="match status" value="1"/>
</dbReference>
<dbReference type="InterPro" id="IPR016195">
    <property type="entry name" value="Pol/histidinol_Pase-like"/>
</dbReference>
<dbReference type="InterPro" id="IPR023539">
    <property type="entry name" value="RNase_P_comp-3_arc"/>
</dbReference>
<dbReference type="InterPro" id="IPR002738">
    <property type="entry name" value="RNase_P_p30"/>
</dbReference>
<dbReference type="NCBIfam" id="NF046111">
    <property type="entry name" value="RNaseP3Mthb"/>
    <property type="match status" value="1"/>
</dbReference>
<dbReference type="PANTHER" id="PTHR13031:SF0">
    <property type="entry name" value="RIBONUCLEASE P PROTEIN SUBUNIT P30"/>
    <property type="match status" value="1"/>
</dbReference>
<dbReference type="PANTHER" id="PTHR13031">
    <property type="entry name" value="RIBONUCLEASE P SUBUNIT P30"/>
    <property type="match status" value="1"/>
</dbReference>
<dbReference type="Pfam" id="PF01876">
    <property type="entry name" value="RNase_P_p30"/>
    <property type="match status" value="1"/>
</dbReference>
<dbReference type="SUPFAM" id="SSF89550">
    <property type="entry name" value="PHP domain-like"/>
    <property type="match status" value="1"/>
</dbReference>
<accession>Q8TPX2</accession>
<comment type="function">
    <text evidence="1">Part of ribonuclease P, a protein complex that generates mature tRNA molecules by cleaving their 5'-ends.</text>
</comment>
<comment type="catalytic activity">
    <reaction evidence="1">
        <text>Endonucleolytic cleavage of RNA, removing 5'-extranucleotides from tRNA precursor.</text>
        <dbReference type="EC" id="3.1.26.5"/>
    </reaction>
</comment>
<comment type="subunit">
    <text evidence="1">Consists of a catalytic RNA component and at least 4-5 protein subunits.</text>
</comment>
<comment type="subcellular location">
    <subcellularLocation>
        <location evidence="1">Cytoplasm</location>
    </subcellularLocation>
</comment>
<comment type="similarity">
    <text evidence="1">Belongs to the eukaryotic/archaeal RNase P protein component 3 family.</text>
</comment>
<feature type="chain" id="PRO_0000140038" description="Ribonuclease P protein component 3">
    <location>
        <begin position="1"/>
        <end position="239"/>
    </location>
</feature>